<evidence type="ECO:0000255" key="1">
    <source>
        <dbReference type="HAMAP-Rule" id="MF_01683"/>
    </source>
</evidence>
<proteinExistence type="inferred from homology"/>
<sequence length="400" mass="44200">MSLYRTFTANDAVEYARQFGGVSQPQTLVAAEEIGDGNLNLVFKIKDETGVSRVIVKQALPYVRCVGESWPLTLDRARIEAETLLTHARFCPQHTVTVLYHDPELAVMVQEDLSDHRIWRSELVKGADYPQAAAQLGEYLAQTLFHTSDFHQHPHEKKAAVSQFTNPELCQITEDLFFTDPYIEHERNQFDAALTPDVQALRDDKALKLAVAGLKHGFLSKAEALLHGDIHSGSIFVAEGRLKAIDAEFGFYGPIGFDVGTAIGNLLLNYCGLPGLLAPREAAAGRERRLEDIRTLWQTFSARFLALSDNESRDPALAESGYAALFLQQVWRDAVGYCGTELIRRTIGLAHVADLDSIQETEARLACQRHAISLGRTLVLAAPHIADVDALLARVRQSGA</sequence>
<accession>C6DCZ0</accession>
<gene>
    <name evidence="1" type="primary">mtnK</name>
    <name type="ordered locus">PC1_3299</name>
</gene>
<protein>
    <recommendedName>
        <fullName evidence="1">Methylthioribose kinase</fullName>
        <shortName evidence="1">MTR kinase</shortName>
        <ecNumber evidence="1">2.7.1.100</ecNumber>
    </recommendedName>
</protein>
<comment type="function">
    <text evidence="1">Catalyzes the phosphorylation of methylthioribose into methylthioribose-1-phosphate.</text>
</comment>
<comment type="catalytic activity">
    <reaction evidence="1">
        <text>5-(methylsulfanyl)-D-ribose + ATP = 5-(methylsulfanyl)-alpha-D-ribose 1-phosphate + ADP + H(+)</text>
        <dbReference type="Rhea" id="RHEA:22312"/>
        <dbReference type="ChEBI" id="CHEBI:15378"/>
        <dbReference type="ChEBI" id="CHEBI:30616"/>
        <dbReference type="ChEBI" id="CHEBI:58533"/>
        <dbReference type="ChEBI" id="CHEBI:78440"/>
        <dbReference type="ChEBI" id="CHEBI:456216"/>
        <dbReference type="EC" id="2.7.1.100"/>
    </reaction>
</comment>
<comment type="pathway">
    <text evidence="1">Amino-acid biosynthesis; L-methionine biosynthesis via salvage pathway; S-methyl-5-thio-alpha-D-ribose 1-phosphate from S-methyl-5'-thioadenosine (hydrolase route): step 2/2.</text>
</comment>
<comment type="subunit">
    <text evidence="1">Homodimer.</text>
</comment>
<comment type="similarity">
    <text evidence="1">Belongs to the methylthioribose kinase family.</text>
</comment>
<name>MTNK_PECCP</name>
<reference key="1">
    <citation type="submission" date="2009-07" db="EMBL/GenBank/DDBJ databases">
        <title>Complete sequence of Pectobacterium carotovorum subsp. carotovorum PC1.</title>
        <authorList>
            <consortium name="US DOE Joint Genome Institute"/>
            <person name="Lucas S."/>
            <person name="Copeland A."/>
            <person name="Lapidus A."/>
            <person name="Glavina del Rio T."/>
            <person name="Tice H."/>
            <person name="Bruce D."/>
            <person name="Goodwin L."/>
            <person name="Pitluck S."/>
            <person name="Munk A.C."/>
            <person name="Brettin T."/>
            <person name="Detter J.C."/>
            <person name="Han C."/>
            <person name="Tapia R."/>
            <person name="Larimer F."/>
            <person name="Land M."/>
            <person name="Hauser L."/>
            <person name="Kyrpides N."/>
            <person name="Mikhailova N."/>
            <person name="Balakrishnan V."/>
            <person name="Glasner J."/>
            <person name="Perna N.T."/>
        </authorList>
    </citation>
    <scope>NUCLEOTIDE SEQUENCE [LARGE SCALE GENOMIC DNA]</scope>
    <source>
        <strain>PC1</strain>
    </source>
</reference>
<organism>
    <name type="scientific">Pectobacterium carotovorum subsp. carotovorum (strain PC1)</name>
    <dbReference type="NCBI Taxonomy" id="561230"/>
    <lineage>
        <taxon>Bacteria</taxon>
        <taxon>Pseudomonadati</taxon>
        <taxon>Pseudomonadota</taxon>
        <taxon>Gammaproteobacteria</taxon>
        <taxon>Enterobacterales</taxon>
        <taxon>Pectobacteriaceae</taxon>
        <taxon>Pectobacterium</taxon>
    </lineage>
</organism>
<dbReference type="EC" id="2.7.1.100" evidence="1"/>
<dbReference type="EMBL" id="CP001657">
    <property type="protein sequence ID" value="ACT14315.1"/>
    <property type="molecule type" value="Genomic_DNA"/>
</dbReference>
<dbReference type="RefSeq" id="WP_015841447.1">
    <property type="nucleotide sequence ID" value="NC_012917.1"/>
</dbReference>
<dbReference type="SMR" id="C6DCZ0"/>
<dbReference type="STRING" id="561230.PC1_3299"/>
<dbReference type="KEGG" id="pct:PC1_3299"/>
<dbReference type="eggNOG" id="COG4857">
    <property type="taxonomic scope" value="Bacteria"/>
</dbReference>
<dbReference type="HOGENOM" id="CLU_033681_0_0_6"/>
<dbReference type="OrthoDB" id="9777791at2"/>
<dbReference type="UniPathway" id="UPA00904">
    <property type="reaction ID" value="UER00872"/>
</dbReference>
<dbReference type="Proteomes" id="UP000002736">
    <property type="component" value="Chromosome"/>
</dbReference>
<dbReference type="GO" id="GO:0005524">
    <property type="term" value="F:ATP binding"/>
    <property type="evidence" value="ECO:0007669"/>
    <property type="project" value="UniProtKB-UniRule"/>
</dbReference>
<dbReference type="GO" id="GO:0046522">
    <property type="term" value="F:S-methyl-5-thioribose kinase activity"/>
    <property type="evidence" value="ECO:0007669"/>
    <property type="project" value="UniProtKB-UniRule"/>
</dbReference>
<dbReference type="GO" id="GO:0019509">
    <property type="term" value="P:L-methionine salvage from methylthioadenosine"/>
    <property type="evidence" value="ECO:0007669"/>
    <property type="project" value="UniProtKB-UniRule"/>
</dbReference>
<dbReference type="Gene3D" id="3.90.1200.10">
    <property type="match status" value="1"/>
</dbReference>
<dbReference type="Gene3D" id="3.30.200.20">
    <property type="entry name" value="Phosphorylase Kinase, domain 1"/>
    <property type="match status" value="1"/>
</dbReference>
<dbReference type="HAMAP" id="MF_01683">
    <property type="entry name" value="Salvage_MtnK"/>
    <property type="match status" value="1"/>
</dbReference>
<dbReference type="InterPro" id="IPR002575">
    <property type="entry name" value="Aminoglycoside_PTrfase"/>
</dbReference>
<dbReference type="InterPro" id="IPR011009">
    <property type="entry name" value="Kinase-like_dom_sf"/>
</dbReference>
<dbReference type="InterPro" id="IPR009212">
    <property type="entry name" value="Methylthioribose_kinase"/>
</dbReference>
<dbReference type="NCBIfam" id="TIGR01767">
    <property type="entry name" value="MTRK"/>
    <property type="match status" value="1"/>
</dbReference>
<dbReference type="PANTHER" id="PTHR34273">
    <property type="entry name" value="METHYLTHIORIBOSE KINASE"/>
    <property type="match status" value="1"/>
</dbReference>
<dbReference type="PANTHER" id="PTHR34273:SF2">
    <property type="entry name" value="METHYLTHIORIBOSE KINASE"/>
    <property type="match status" value="1"/>
</dbReference>
<dbReference type="Pfam" id="PF01636">
    <property type="entry name" value="APH"/>
    <property type="match status" value="1"/>
</dbReference>
<dbReference type="PIRSF" id="PIRSF031134">
    <property type="entry name" value="MTRK"/>
    <property type="match status" value="1"/>
</dbReference>
<dbReference type="SUPFAM" id="SSF56112">
    <property type="entry name" value="Protein kinase-like (PK-like)"/>
    <property type="match status" value="1"/>
</dbReference>
<feature type="chain" id="PRO_1000215907" description="Methylthioribose kinase">
    <location>
        <begin position="1"/>
        <end position="400"/>
    </location>
</feature>
<feature type="binding site" evidence="1">
    <location>
        <position position="40"/>
    </location>
    <ligand>
        <name>ATP</name>
        <dbReference type="ChEBI" id="CHEBI:30616"/>
    </ligand>
</feature>
<feature type="binding site" evidence="1">
    <location>
        <position position="57"/>
    </location>
    <ligand>
        <name>ATP</name>
        <dbReference type="ChEBI" id="CHEBI:30616"/>
    </ligand>
</feature>
<feature type="binding site" evidence="1">
    <location>
        <begin position="111"/>
        <end position="113"/>
    </location>
    <ligand>
        <name>ATP</name>
        <dbReference type="ChEBI" id="CHEBI:30616"/>
    </ligand>
</feature>
<feature type="binding site" evidence="1">
    <location>
        <position position="229"/>
    </location>
    <ligand>
        <name>substrate</name>
    </ligand>
</feature>
<feature type="binding site" evidence="1">
    <location>
        <begin position="246"/>
        <end position="248"/>
    </location>
    <ligand>
        <name>ATP</name>
        <dbReference type="ChEBI" id="CHEBI:30616"/>
    </ligand>
</feature>
<feature type="binding site" evidence="1">
    <location>
        <position position="344"/>
    </location>
    <ligand>
        <name>substrate</name>
    </ligand>
</feature>
<keyword id="KW-0028">Amino-acid biosynthesis</keyword>
<keyword id="KW-0067">ATP-binding</keyword>
<keyword id="KW-0418">Kinase</keyword>
<keyword id="KW-0486">Methionine biosynthesis</keyword>
<keyword id="KW-0547">Nucleotide-binding</keyword>
<keyword id="KW-0808">Transferase</keyword>